<organism>
    <name type="scientific">Mus musculus</name>
    <name type="common">Mouse</name>
    <dbReference type="NCBI Taxonomy" id="10090"/>
    <lineage>
        <taxon>Eukaryota</taxon>
        <taxon>Metazoa</taxon>
        <taxon>Chordata</taxon>
        <taxon>Craniata</taxon>
        <taxon>Vertebrata</taxon>
        <taxon>Euteleostomi</taxon>
        <taxon>Mammalia</taxon>
        <taxon>Eutheria</taxon>
        <taxon>Euarchontoglires</taxon>
        <taxon>Glires</taxon>
        <taxon>Rodentia</taxon>
        <taxon>Myomorpha</taxon>
        <taxon>Muroidea</taxon>
        <taxon>Muridae</taxon>
        <taxon>Murinae</taxon>
        <taxon>Mus</taxon>
        <taxon>Mus</taxon>
    </lineage>
</organism>
<feature type="chain" id="PRO_0000307325" description="ADP-ribosylation factor-like protein 6-interacting protein 6">
    <location>
        <begin position="1"/>
        <end position="226"/>
    </location>
</feature>
<feature type="transmembrane region" description="Helical" evidence="2">
    <location>
        <begin position="111"/>
        <end position="131"/>
    </location>
</feature>
<feature type="transmembrane region" description="Helical" evidence="2">
    <location>
        <begin position="150"/>
        <end position="170"/>
    </location>
</feature>
<feature type="transmembrane region" description="Helical" evidence="2">
    <location>
        <begin position="205"/>
        <end position="225"/>
    </location>
</feature>
<feature type="region of interest" description="Disordered" evidence="3">
    <location>
        <begin position="1"/>
        <end position="49"/>
    </location>
</feature>
<feature type="compositionally biased region" description="Acidic residues" evidence="3">
    <location>
        <begin position="38"/>
        <end position="48"/>
    </location>
</feature>
<feature type="modified residue" description="Phosphoserine" evidence="1">
    <location>
        <position position="2"/>
    </location>
</feature>
<feature type="modified residue" description="Phosphoserine" evidence="1">
    <location>
        <position position="36"/>
    </location>
</feature>
<feature type="modified residue" description="Phosphoserine" evidence="1">
    <location>
        <position position="60"/>
    </location>
</feature>
<feature type="modified residue" description="Phosphoserine" evidence="1">
    <location>
        <position position="65"/>
    </location>
</feature>
<feature type="modified residue" description="Phosphoserine" evidence="6">
    <location>
        <position position="80"/>
    </location>
</feature>
<feature type="sequence conflict" description="In Ref. 1; BAB27377." evidence="5" ref="1">
    <original>G</original>
    <variation>W</variation>
    <location>
        <position position="11"/>
    </location>
</feature>
<feature type="sequence conflict" description="In Ref. 1; BAB27377." evidence="5" ref="1">
    <original>R</original>
    <variation>A</variation>
    <location>
        <position position="15"/>
    </location>
</feature>
<feature type="sequence conflict" description="In Ref. 1; BAB30169." evidence="5" ref="1">
    <original>R</original>
    <variation>P</variation>
    <location>
        <position position="15"/>
    </location>
</feature>
<feature type="sequence conflict" description="In Ref. 4; AAD33051." evidence="5" ref="4">
    <original>D</original>
    <variation>N</variation>
    <location>
        <position position="45"/>
    </location>
</feature>
<feature type="sequence conflict" description="In Ref. 1; BAC28004." evidence="5" ref="1">
    <original>G</original>
    <variation>V</variation>
    <location>
        <position position="200"/>
    </location>
</feature>
<feature type="sequence conflict" description="In Ref. 3; AAH19550." evidence="5" ref="3">
    <original>I</original>
    <variation>V</variation>
    <location>
        <position position="215"/>
    </location>
</feature>
<comment type="subcellular location">
    <subcellularLocation>
        <location evidence="4">Nucleus inner membrane</location>
        <topology evidence="2">Multi-pass membrane protein</topology>
    </subcellularLocation>
</comment>
<comment type="similarity">
    <text evidence="5">Belongs to the ARL6IP6 family.</text>
</comment>
<comment type="sequence caution" evidence="5">
    <conflict type="miscellaneous discrepancy">
        <sequence resource="EMBL-CDS" id="AAD33051"/>
    </conflict>
    <text>Contaminating sequence.</text>
</comment>
<comment type="sequence caution" evidence="5">
    <conflict type="frameshift">
        <sequence resource="EMBL-CDS" id="BAB27377"/>
    </conflict>
</comment>
<keyword id="KW-0472">Membrane</keyword>
<keyword id="KW-0539">Nucleus</keyword>
<keyword id="KW-0597">Phosphoprotein</keyword>
<keyword id="KW-1185">Reference proteome</keyword>
<keyword id="KW-0812">Transmembrane</keyword>
<keyword id="KW-1133">Transmembrane helix</keyword>
<name>AR6P6_MOUSE</name>
<reference key="1">
    <citation type="journal article" date="2005" name="Science">
        <title>The transcriptional landscape of the mammalian genome.</title>
        <authorList>
            <person name="Carninci P."/>
            <person name="Kasukawa T."/>
            <person name="Katayama S."/>
            <person name="Gough J."/>
            <person name="Frith M.C."/>
            <person name="Maeda N."/>
            <person name="Oyama R."/>
            <person name="Ravasi T."/>
            <person name="Lenhard B."/>
            <person name="Wells C."/>
            <person name="Kodzius R."/>
            <person name="Shimokawa K."/>
            <person name="Bajic V.B."/>
            <person name="Brenner S.E."/>
            <person name="Batalov S."/>
            <person name="Forrest A.R."/>
            <person name="Zavolan M."/>
            <person name="Davis M.J."/>
            <person name="Wilming L.G."/>
            <person name="Aidinis V."/>
            <person name="Allen J.E."/>
            <person name="Ambesi-Impiombato A."/>
            <person name="Apweiler R."/>
            <person name="Aturaliya R.N."/>
            <person name="Bailey T.L."/>
            <person name="Bansal M."/>
            <person name="Baxter L."/>
            <person name="Beisel K.W."/>
            <person name="Bersano T."/>
            <person name="Bono H."/>
            <person name="Chalk A.M."/>
            <person name="Chiu K.P."/>
            <person name="Choudhary V."/>
            <person name="Christoffels A."/>
            <person name="Clutterbuck D.R."/>
            <person name="Crowe M.L."/>
            <person name="Dalla E."/>
            <person name="Dalrymple B.P."/>
            <person name="de Bono B."/>
            <person name="Della Gatta G."/>
            <person name="di Bernardo D."/>
            <person name="Down T."/>
            <person name="Engstrom P."/>
            <person name="Fagiolini M."/>
            <person name="Faulkner G."/>
            <person name="Fletcher C.F."/>
            <person name="Fukushima T."/>
            <person name="Furuno M."/>
            <person name="Futaki S."/>
            <person name="Gariboldi M."/>
            <person name="Georgii-Hemming P."/>
            <person name="Gingeras T.R."/>
            <person name="Gojobori T."/>
            <person name="Green R.E."/>
            <person name="Gustincich S."/>
            <person name="Harbers M."/>
            <person name="Hayashi Y."/>
            <person name="Hensch T.K."/>
            <person name="Hirokawa N."/>
            <person name="Hill D."/>
            <person name="Huminiecki L."/>
            <person name="Iacono M."/>
            <person name="Ikeo K."/>
            <person name="Iwama A."/>
            <person name="Ishikawa T."/>
            <person name="Jakt M."/>
            <person name="Kanapin A."/>
            <person name="Katoh M."/>
            <person name="Kawasawa Y."/>
            <person name="Kelso J."/>
            <person name="Kitamura H."/>
            <person name="Kitano H."/>
            <person name="Kollias G."/>
            <person name="Krishnan S.P."/>
            <person name="Kruger A."/>
            <person name="Kummerfeld S.K."/>
            <person name="Kurochkin I.V."/>
            <person name="Lareau L.F."/>
            <person name="Lazarevic D."/>
            <person name="Lipovich L."/>
            <person name="Liu J."/>
            <person name="Liuni S."/>
            <person name="McWilliam S."/>
            <person name="Madan Babu M."/>
            <person name="Madera M."/>
            <person name="Marchionni L."/>
            <person name="Matsuda H."/>
            <person name="Matsuzawa S."/>
            <person name="Miki H."/>
            <person name="Mignone F."/>
            <person name="Miyake S."/>
            <person name="Morris K."/>
            <person name="Mottagui-Tabar S."/>
            <person name="Mulder N."/>
            <person name="Nakano N."/>
            <person name="Nakauchi H."/>
            <person name="Ng P."/>
            <person name="Nilsson R."/>
            <person name="Nishiguchi S."/>
            <person name="Nishikawa S."/>
            <person name="Nori F."/>
            <person name="Ohara O."/>
            <person name="Okazaki Y."/>
            <person name="Orlando V."/>
            <person name="Pang K.C."/>
            <person name="Pavan W.J."/>
            <person name="Pavesi G."/>
            <person name="Pesole G."/>
            <person name="Petrovsky N."/>
            <person name="Piazza S."/>
            <person name="Reed J."/>
            <person name="Reid J.F."/>
            <person name="Ring B.Z."/>
            <person name="Ringwald M."/>
            <person name="Rost B."/>
            <person name="Ruan Y."/>
            <person name="Salzberg S.L."/>
            <person name="Sandelin A."/>
            <person name="Schneider C."/>
            <person name="Schoenbach C."/>
            <person name="Sekiguchi K."/>
            <person name="Semple C.A."/>
            <person name="Seno S."/>
            <person name="Sessa L."/>
            <person name="Sheng Y."/>
            <person name="Shibata Y."/>
            <person name="Shimada H."/>
            <person name="Shimada K."/>
            <person name="Silva D."/>
            <person name="Sinclair B."/>
            <person name="Sperling S."/>
            <person name="Stupka E."/>
            <person name="Sugiura K."/>
            <person name="Sultana R."/>
            <person name="Takenaka Y."/>
            <person name="Taki K."/>
            <person name="Tammoja K."/>
            <person name="Tan S.L."/>
            <person name="Tang S."/>
            <person name="Taylor M.S."/>
            <person name="Tegner J."/>
            <person name="Teichmann S.A."/>
            <person name="Ueda H.R."/>
            <person name="van Nimwegen E."/>
            <person name="Verardo R."/>
            <person name="Wei C.L."/>
            <person name="Yagi K."/>
            <person name="Yamanishi H."/>
            <person name="Zabarovsky E."/>
            <person name="Zhu S."/>
            <person name="Zimmer A."/>
            <person name="Hide W."/>
            <person name="Bult C."/>
            <person name="Grimmond S.M."/>
            <person name="Teasdale R.D."/>
            <person name="Liu E.T."/>
            <person name="Brusic V."/>
            <person name="Quackenbush J."/>
            <person name="Wahlestedt C."/>
            <person name="Mattick J.S."/>
            <person name="Hume D.A."/>
            <person name="Kai C."/>
            <person name="Sasaki D."/>
            <person name="Tomaru Y."/>
            <person name="Fukuda S."/>
            <person name="Kanamori-Katayama M."/>
            <person name="Suzuki M."/>
            <person name="Aoki J."/>
            <person name="Arakawa T."/>
            <person name="Iida J."/>
            <person name="Imamura K."/>
            <person name="Itoh M."/>
            <person name="Kato T."/>
            <person name="Kawaji H."/>
            <person name="Kawagashira N."/>
            <person name="Kawashima T."/>
            <person name="Kojima M."/>
            <person name="Kondo S."/>
            <person name="Konno H."/>
            <person name="Nakano K."/>
            <person name="Ninomiya N."/>
            <person name="Nishio T."/>
            <person name="Okada M."/>
            <person name="Plessy C."/>
            <person name="Shibata K."/>
            <person name="Shiraki T."/>
            <person name="Suzuki S."/>
            <person name="Tagami M."/>
            <person name="Waki K."/>
            <person name="Watahiki A."/>
            <person name="Okamura-Oho Y."/>
            <person name="Suzuki H."/>
            <person name="Kawai J."/>
            <person name="Hayashizaki Y."/>
        </authorList>
    </citation>
    <scope>NUCLEOTIDE SEQUENCE [LARGE SCALE MRNA]</scope>
    <source>
        <strain>C57BL/6J</strain>
        <tissue>Embryonic stem cell</tissue>
        <tissue>Fetal eye</tissue>
        <tissue>Liver</tissue>
        <tissue>Testis</tissue>
        <tissue>Urinary bladder</tissue>
        <tissue>Wolffian duct</tissue>
    </source>
</reference>
<reference key="2">
    <citation type="journal article" date="2009" name="PLoS Biol.">
        <title>Lineage-specific biology revealed by a finished genome assembly of the mouse.</title>
        <authorList>
            <person name="Church D.M."/>
            <person name="Goodstadt L."/>
            <person name="Hillier L.W."/>
            <person name="Zody M.C."/>
            <person name="Goldstein S."/>
            <person name="She X."/>
            <person name="Bult C.J."/>
            <person name="Agarwala R."/>
            <person name="Cherry J.L."/>
            <person name="DiCuccio M."/>
            <person name="Hlavina W."/>
            <person name="Kapustin Y."/>
            <person name="Meric P."/>
            <person name="Maglott D."/>
            <person name="Birtle Z."/>
            <person name="Marques A.C."/>
            <person name="Graves T."/>
            <person name="Zhou S."/>
            <person name="Teague B."/>
            <person name="Potamousis K."/>
            <person name="Churas C."/>
            <person name="Place M."/>
            <person name="Herschleb J."/>
            <person name="Runnheim R."/>
            <person name="Forrest D."/>
            <person name="Amos-Landgraf J."/>
            <person name="Schwartz D.C."/>
            <person name="Cheng Z."/>
            <person name="Lindblad-Toh K."/>
            <person name="Eichler E.E."/>
            <person name="Ponting C.P."/>
        </authorList>
    </citation>
    <scope>NUCLEOTIDE SEQUENCE [LARGE SCALE GENOMIC DNA]</scope>
    <source>
        <strain>C57BL/6J</strain>
    </source>
</reference>
<reference key="3">
    <citation type="journal article" date="2004" name="Genome Res.">
        <title>The status, quality, and expansion of the NIH full-length cDNA project: the Mammalian Gene Collection (MGC).</title>
        <authorList>
            <consortium name="The MGC Project Team"/>
        </authorList>
    </citation>
    <scope>NUCLEOTIDE SEQUENCE [LARGE SCALE MRNA]</scope>
    <source>
        <strain>FVB/N</strain>
        <tissue>Liver</tissue>
    </source>
</reference>
<reference key="4">
    <citation type="journal article" date="1999" name="FEBS Lett.">
        <title>A novel ADP-ribosylation like factor (ARL-6), interacts with the protein-conducting channel SEC61beta subunit.</title>
        <authorList>
            <person name="Ingley E."/>
            <person name="Williams J.H."/>
            <person name="Walker C.E."/>
            <person name="Tsai S."/>
            <person name="Colley S."/>
            <person name="Sayer M.S."/>
            <person name="Tilbrook P.A."/>
            <person name="Sarna M."/>
            <person name="Beaumont J.G."/>
            <person name="Klinken S.P."/>
        </authorList>
    </citation>
    <scope>NUCLEOTIDE SEQUENCE [MRNA] OF 12-125</scope>
</reference>
<reference key="5">
    <citation type="journal article" date="2009" name="Immunity">
        <title>The phagosomal proteome in interferon-gamma-activated macrophages.</title>
        <authorList>
            <person name="Trost M."/>
            <person name="English L."/>
            <person name="Lemieux S."/>
            <person name="Courcelles M."/>
            <person name="Desjardins M."/>
            <person name="Thibault P."/>
        </authorList>
    </citation>
    <scope>PHOSPHORYLATION [LARGE SCALE ANALYSIS] AT SER-80</scope>
    <scope>IDENTIFICATION BY MASS SPECTROMETRY [LARGE SCALE ANALYSIS]</scope>
</reference>
<reference key="6">
    <citation type="journal article" date="2010" name="Cell">
        <title>A tissue-specific atlas of mouse protein phosphorylation and expression.</title>
        <authorList>
            <person name="Huttlin E.L."/>
            <person name="Jedrychowski M.P."/>
            <person name="Elias J.E."/>
            <person name="Goswami T."/>
            <person name="Rad R."/>
            <person name="Beausoleil S.A."/>
            <person name="Villen J."/>
            <person name="Haas W."/>
            <person name="Sowa M.E."/>
            <person name="Gygi S.P."/>
        </authorList>
    </citation>
    <scope>IDENTIFICATION BY MASS SPECTROMETRY [LARGE SCALE ANALYSIS]</scope>
    <source>
        <tissue>Spleen</tissue>
    </source>
</reference>
<reference key="7">
    <citation type="journal article" date="2019" name="Nucleus">
        <title>Identification of new transmembrane proteins concentrated at the nuclear envelope using organellar proteomics of mesenchymal cells.</title>
        <authorList>
            <person name="Cheng L.C."/>
            <person name="Baboo S."/>
            <person name="Lindsay C."/>
            <person name="Brusman L."/>
            <person name="Martinez-Bartolome S."/>
            <person name="Tapia O."/>
            <person name="Zhang X."/>
            <person name="Yates J.R. III"/>
            <person name="Gerace L."/>
        </authorList>
    </citation>
    <scope>IDENTIFICATION BY MASS SPECTROMETRY</scope>
    <scope>SUBCELLULAR LOCATION</scope>
</reference>
<proteinExistence type="evidence at protein level"/>
<accession>Q8BH07</accession>
<accession>Q8BSK7</accession>
<accession>Q8VCL3</accession>
<accession>Q9CY07</accession>
<accession>Q9D4R5</accession>
<accession>Q9WUH0</accession>
<dbReference type="EMBL" id="AK011070">
    <property type="protein sequence ID" value="BAB27377.1"/>
    <property type="status" value="ALT_FRAME"/>
    <property type="molecule type" value="mRNA"/>
</dbReference>
<dbReference type="EMBL" id="AK016267">
    <property type="protein sequence ID" value="BAB30169.1"/>
    <property type="molecule type" value="mRNA"/>
</dbReference>
<dbReference type="EMBL" id="AK032740">
    <property type="protein sequence ID" value="BAC28004.1"/>
    <property type="molecule type" value="mRNA"/>
</dbReference>
<dbReference type="EMBL" id="AK035521">
    <property type="protein sequence ID" value="BAC29090.1"/>
    <property type="molecule type" value="mRNA"/>
</dbReference>
<dbReference type="EMBL" id="AK052010">
    <property type="protein sequence ID" value="BAC34831.1"/>
    <property type="molecule type" value="mRNA"/>
</dbReference>
<dbReference type="EMBL" id="AK082824">
    <property type="protein sequence ID" value="BAC38638.1"/>
    <property type="molecule type" value="mRNA"/>
</dbReference>
<dbReference type="EMBL" id="AK159990">
    <property type="protein sequence ID" value="BAE35540.1"/>
    <property type="molecule type" value="mRNA"/>
</dbReference>
<dbReference type="EMBL" id="AL844552">
    <property type="status" value="NOT_ANNOTATED_CDS"/>
    <property type="molecule type" value="Genomic_DNA"/>
</dbReference>
<dbReference type="EMBL" id="AL845170">
    <property type="status" value="NOT_ANNOTATED_CDS"/>
    <property type="molecule type" value="Genomic_DNA"/>
</dbReference>
<dbReference type="EMBL" id="BC019550">
    <property type="protein sequence ID" value="AAH19550.1"/>
    <property type="molecule type" value="mRNA"/>
</dbReference>
<dbReference type="EMBL" id="AF133913">
    <property type="protein sequence ID" value="AAD33051.1"/>
    <property type="status" value="ALT_SEQ"/>
    <property type="molecule type" value="mRNA"/>
</dbReference>
<dbReference type="CCDS" id="CCDS16039.1"/>
<dbReference type="RefSeq" id="NP_075365.3">
    <property type="nucleotide sequence ID" value="NM_022989.4"/>
</dbReference>
<dbReference type="BioGRID" id="211129">
    <property type="interactions" value="1"/>
</dbReference>
<dbReference type="FunCoup" id="Q8BH07">
    <property type="interactions" value="1562"/>
</dbReference>
<dbReference type="STRING" id="10090.ENSMUSP00000028336"/>
<dbReference type="GlyGen" id="Q8BH07">
    <property type="glycosylation" value="1 site"/>
</dbReference>
<dbReference type="iPTMnet" id="Q8BH07"/>
<dbReference type="PhosphoSitePlus" id="Q8BH07"/>
<dbReference type="SwissPalm" id="Q8BH07"/>
<dbReference type="jPOST" id="Q8BH07"/>
<dbReference type="PaxDb" id="10090-ENSMUSP00000028336"/>
<dbReference type="ProteomicsDB" id="283252"/>
<dbReference type="Pumba" id="Q8BH07"/>
<dbReference type="Antibodypedia" id="3110">
    <property type="antibodies" value="101 antibodies from 21 providers"/>
</dbReference>
<dbReference type="DNASU" id="65103"/>
<dbReference type="Ensembl" id="ENSMUST00000028336.7">
    <property type="protein sequence ID" value="ENSMUSP00000028336.7"/>
    <property type="gene ID" value="ENSMUSG00000026960.7"/>
</dbReference>
<dbReference type="GeneID" id="65103"/>
<dbReference type="KEGG" id="mmu:65103"/>
<dbReference type="UCSC" id="uc008jro.2">
    <property type="organism name" value="mouse"/>
</dbReference>
<dbReference type="AGR" id="MGI:1929507"/>
<dbReference type="CTD" id="151188"/>
<dbReference type="MGI" id="MGI:1929507">
    <property type="gene designation" value="Arl6ip6"/>
</dbReference>
<dbReference type="VEuPathDB" id="HostDB:ENSMUSG00000026960"/>
<dbReference type="eggNOG" id="ENOG502S1PC">
    <property type="taxonomic scope" value="Eukaryota"/>
</dbReference>
<dbReference type="GeneTree" id="ENSGT00390000009987"/>
<dbReference type="HOGENOM" id="CLU_1229535_0_0_1"/>
<dbReference type="InParanoid" id="Q8BH07"/>
<dbReference type="OMA" id="TVAWCLL"/>
<dbReference type="OrthoDB" id="10070125at2759"/>
<dbReference type="PhylomeDB" id="Q8BH07"/>
<dbReference type="TreeFam" id="TF324669"/>
<dbReference type="BioGRID-ORCS" id="65103">
    <property type="hits" value="3 hits in 77 CRISPR screens"/>
</dbReference>
<dbReference type="ChiTaRS" id="Arl6ip6">
    <property type="organism name" value="mouse"/>
</dbReference>
<dbReference type="PRO" id="PR:Q8BH07"/>
<dbReference type="Proteomes" id="UP000000589">
    <property type="component" value="Chromosome 2"/>
</dbReference>
<dbReference type="RNAct" id="Q8BH07">
    <property type="molecule type" value="protein"/>
</dbReference>
<dbReference type="Bgee" id="ENSMUSG00000026960">
    <property type="expression patterns" value="Expressed in medial ganglionic eminence and 255 other cell types or tissues"/>
</dbReference>
<dbReference type="GO" id="GO:0005637">
    <property type="term" value="C:nuclear inner membrane"/>
    <property type="evidence" value="ECO:0000314"/>
    <property type="project" value="UniProtKB"/>
</dbReference>
<dbReference type="InterPro" id="IPR029383">
    <property type="entry name" value="ARL6IP6"/>
</dbReference>
<dbReference type="PANTHER" id="PTHR28640">
    <property type="entry name" value="ADP-RIBOSYLATION FACTOR-LIKE PROTEIN 6-INTERACTING PROTEIN 6"/>
    <property type="match status" value="1"/>
</dbReference>
<dbReference type="PANTHER" id="PTHR28640:SF1">
    <property type="entry name" value="ADP-RIBOSYLATION FACTOR-LIKE PROTEIN 6-INTERACTING PROTEIN 6"/>
    <property type="match status" value="1"/>
</dbReference>
<dbReference type="Pfam" id="PF15062">
    <property type="entry name" value="ARL6IP6"/>
    <property type="match status" value="1"/>
</dbReference>
<evidence type="ECO:0000250" key="1">
    <source>
        <dbReference type="UniProtKB" id="Q8N6S5"/>
    </source>
</evidence>
<evidence type="ECO:0000255" key="2"/>
<evidence type="ECO:0000256" key="3">
    <source>
        <dbReference type="SAM" id="MobiDB-lite"/>
    </source>
</evidence>
<evidence type="ECO:0000269" key="4">
    <source>
    </source>
</evidence>
<evidence type="ECO:0000305" key="5"/>
<evidence type="ECO:0007744" key="6">
    <source>
    </source>
</evidence>
<protein>
    <recommendedName>
        <fullName>ADP-ribosylation factor-like protein 6-interacting protein 6</fullName>
        <shortName>ARL-6-interacting protein 6</shortName>
        <shortName>Aip-6</shortName>
    </recommendedName>
</protein>
<sequence length="226" mass="24909">MSFVESWRFAGARRRRQVTPGPATRPGYSDYTQGDSWGEGEGDEDEGCDQVARDLRAEFSARASSETKRAPLLPRVGDGSPVLPDKRNGIFPATAAKRTQARRWPIQALSILCSLLFAVLLAFLLAIAYMIVKELHAENLKNEDDIHTGLLGFWSLLIISLTAGLSCCSFSWTVTYFDSFEPGMFPPTPLSPARFKKLTGHSFHMGYSMAILNGIVAALTVAWCLM</sequence>
<gene>
    <name type="primary">Arl6ip6</name>
</gene>